<dbReference type="EC" id="4.1.1.39" evidence="1"/>
<dbReference type="EMBL" id="U55037">
    <property type="protein sequence ID" value="AAD10331.1"/>
    <property type="molecule type" value="Genomic_DNA"/>
</dbReference>
<dbReference type="SMR" id="Q9ZB35"/>
<dbReference type="GO" id="GO:0000287">
    <property type="term" value="F:magnesium ion binding"/>
    <property type="evidence" value="ECO:0007669"/>
    <property type="project" value="UniProtKB-UniRule"/>
</dbReference>
<dbReference type="GO" id="GO:0004497">
    <property type="term" value="F:monooxygenase activity"/>
    <property type="evidence" value="ECO:0007669"/>
    <property type="project" value="UniProtKB-KW"/>
</dbReference>
<dbReference type="GO" id="GO:0016984">
    <property type="term" value="F:ribulose-bisphosphate carboxylase activity"/>
    <property type="evidence" value="ECO:0007669"/>
    <property type="project" value="UniProtKB-UniRule"/>
</dbReference>
<dbReference type="GO" id="GO:0019253">
    <property type="term" value="P:reductive pentose-phosphate cycle"/>
    <property type="evidence" value="ECO:0007669"/>
    <property type="project" value="UniProtKB-UniRule"/>
</dbReference>
<dbReference type="Gene3D" id="3.20.20.110">
    <property type="entry name" value="Ribulose bisphosphate carboxylase, large subunit, C-terminal domain"/>
    <property type="match status" value="1"/>
</dbReference>
<dbReference type="Gene3D" id="3.30.70.150">
    <property type="entry name" value="RuBisCO large subunit, N-terminal domain"/>
    <property type="match status" value="1"/>
</dbReference>
<dbReference type="HAMAP" id="MF_01338">
    <property type="entry name" value="RuBisCO_L_type1"/>
    <property type="match status" value="1"/>
</dbReference>
<dbReference type="InterPro" id="IPR033966">
    <property type="entry name" value="RuBisCO"/>
</dbReference>
<dbReference type="InterPro" id="IPR020878">
    <property type="entry name" value="RuBisCo_large_chain_AS"/>
</dbReference>
<dbReference type="InterPro" id="IPR000685">
    <property type="entry name" value="RuBisCO_lsu_C"/>
</dbReference>
<dbReference type="InterPro" id="IPR036376">
    <property type="entry name" value="RuBisCO_lsu_C_sf"/>
</dbReference>
<dbReference type="InterPro" id="IPR017443">
    <property type="entry name" value="RuBisCO_lsu_fd_N"/>
</dbReference>
<dbReference type="InterPro" id="IPR036422">
    <property type="entry name" value="RuBisCO_lsu_N_sf"/>
</dbReference>
<dbReference type="InterPro" id="IPR020888">
    <property type="entry name" value="RuBisCO_lsuI"/>
</dbReference>
<dbReference type="NCBIfam" id="NF003252">
    <property type="entry name" value="PRK04208.1"/>
    <property type="match status" value="1"/>
</dbReference>
<dbReference type="PANTHER" id="PTHR42704">
    <property type="entry name" value="RIBULOSE BISPHOSPHATE CARBOXYLASE"/>
    <property type="match status" value="1"/>
</dbReference>
<dbReference type="PANTHER" id="PTHR42704:SF17">
    <property type="entry name" value="RIBULOSE BISPHOSPHATE CARBOXYLASE LARGE CHAIN"/>
    <property type="match status" value="1"/>
</dbReference>
<dbReference type="Pfam" id="PF00016">
    <property type="entry name" value="RuBisCO_large"/>
    <property type="match status" value="1"/>
</dbReference>
<dbReference type="Pfam" id="PF02788">
    <property type="entry name" value="RuBisCO_large_N"/>
    <property type="match status" value="1"/>
</dbReference>
<dbReference type="SFLD" id="SFLDG01052">
    <property type="entry name" value="RuBisCO"/>
    <property type="match status" value="1"/>
</dbReference>
<dbReference type="SFLD" id="SFLDS00014">
    <property type="entry name" value="RuBisCO"/>
    <property type="match status" value="1"/>
</dbReference>
<dbReference type="SFLD" id="SFLDG00301">
    <property type="entry name" value="RuBisCO-like_proteins"/>
    <property type="match status" value="1"/>
</dbReference>
<dbReference type="SUPFAM" id="SSF51649">
    <property type="entry name" value="RuBisCo, C-terminal domain"/>
    <property type="match status" value="1"/>
</dbReference>
<dbReference type="SUPFAM" id="SSF54966">
    <property type="entry name" value="RuBisCO, large subunit, small (N-terminal) domain"/>
    <property type="match status" value="1"/>
</dbReference>
<dbReference type="PROSITE" id="PS00157">
    <property type="entry name" value="RUBISCO_LARGE"/>
    <property type="match status" value="1"/>
</dbReference>
<evidence type="ECO:0000255" key="1">
    <source>
        <dbReference type="HAMAP-Rule" id="MF_01338"/>
    </source>
</evidence>
<evidence type="ECO:0000269" key="2">
    <source>
    </source>
</evidence>
<evidence type="ECO:0000305" key="3"/>
<evidence type="ECO:0000305" key="4">
    <source>
    </source>
</evidence>
<protein>
    <recommendedName>
        <fullName evidence="1">Ribulose bisphosphate carboxylase large chain</fullName>
        <shortName evidence="1">RuBisCO large subunit</shortName>
        <ecNumber evidence="1">4.1.1.39</ecNumber>
    </recommendedName>
</protein>
<reference key="1">
    <citation type="journal article" date="1998" name="Mol. Cells">
        <title>Cloning and characterization of ribulose bisphosphate carboxylase gene of a carboxydobacterium, Hydrogenophagea pseudoflava DSM 1084.</title>
        <authorList>
            <person name="Lee S.N."/>
            <person name="Kim Y.M."/>
        </authorList>
    </citation>
    <scope>NUCLEOTIDE SEQUENCE [GENOMIC DNA]</scope>
    <source>
        <strain>DSM 1084 / CCUG 22764 / Z-1107</strain>
    </source>
</reference>
<reference key="2">
    <citation type="journal article" date="1997" name="Mol. Cells">
        <title>Purification and some properties of ribulose 1,5-bisphosphate carboxylases/oxygenases from Acinetobacter sp. strain JC1 and Hydrogenophaga pseudoflava.</title>
        <authorList>
            <person name="Kim E.Y."/>
            <person name="Ro Y.T."/>
            <person name="Kim Y.M."/>
        </authorList>
    </citation>
    <scope>PROTEIN SEQUENCE OF 2-16</scope>
    <scope>SUBUNIT</scope>
    <scope>CHARACTERIZATION</scope>
    <source>
        <strain>DSM 1084 / CCUG 22764 / Z-1107</strain>
    </source>
</reference>
<organism>
    <name type="scientific">Hydrogenophaga pseudoflava</name>
    <name type="common">Pseudomonas carboxydoflava</name>
    <dbReference type="NCBI Taxonomy" id="47421"/>
    <lineage>
        <taxon>Bacteria</taxon>
        <taxon>Pseudomonadati</taxon>
        <taxon>Pseudomonadota</taxon>
        <taxon>Betaproteobacteria</taxon>
        <taxon>Burkholderiales</taxon>
        <taxon>Comamonadaceae</taxon>
        <taxon>Hydrogenophaga</taxon>
    </lineage>
</organism>
<feature type="initiator methionine" description="Removed" evidence="2">
    <location>
        <position position="1"/>
    </location>
</feature>
<feature type="chain" id="PRO_0000062626" description="Ribulose bisphosphate carboxylase large chain">
    <location>
        <begin position="2"/>
        <end position="473"/>
    </location>
</feature>
<feature type="active site" description="Proton acceptor" evidence="1">
    <location>
        <position position="168"/>
    </location>
</feature>
<feature type="active site" description="Proton acceptor" evidence="1">
    <location>
        <position position="287"/>
    </location>
</feature>
<feature type="binding site" description="in homodimeric partner" evidence="1">
    <location>
        <position position="116"/>
    </location>
    <ligand>
        <name>substrate</name>
    </ligand>
</feature>
<feature type="binding site" evidence="1">
    <location>
        <position position="166"/>
    </location>
    <ligand>
        <name>substrate</name>
    </ligand>
</feature>
<feature type="binding site" evidence="1">
    <location>
        <position position="170"/>
    </location>
    <ligand>
        <name>substrate</name>
    </ligand>
</feature>
<feature type="binding site" description="via carbamate group" evidence="1">
    <location>
        <position position="194"/>
    </location>
    <ligand>
        <name>Mg(2+)</name>
        <dbReference type="ChEBI" id="CHEBI:18420"/>
    </ligand>
</feature>
<feature type="binding site" evidence="1">
    <location>
        <position position="196"/>
    </location>
    <ligand>
        <name>Mg(2+)</name>
        <dbReference type="ChEBI" id="CHEBI:18420"/>
    </ligand>
</feature>
<feature type="binding site" evidence="1">
    <location>
        <position position="197"/>
    </location>
    <ligand>
        <name>Mg(2+)</name>
        <dbReference type="ChEBI" id="CHEBI:18420"/>
    </ligand>
</feature>
<feature type="binding site" evidence="1">
    <location>
        <position position="288"/>
    </location>
    <ligand>
        <name>substrate</name>
    </ligand>
</feature>
<feature type="binding site" evidence="1">
    <location>
        <position position="320"/>
    </location>
    <ligand>
        <name>substrate</name>
    </ligand>
</feature>
<feature type="binding site" evidence="1">
    <location>
        <position position="372"/>
    </location>
    <ligand>
        <name>substrate</name>
    </ligand>
</feature>
<feature type="site" description="Transition state stabilizer" evidence="1">
    <location>
        <position position="327"/>
    </location>
</feature>
<feature type="modified residue" description="N6-carboxylysine" evidence="1">
    <location>
        <position position="194"/>
    </location>
</feature>
<feature type="sequence conflict" description="In Ref. 2; AA sequence." evidence="3" ref="2">
    <original>R</original>
    <variation>W</variation>
    <location>
        <position position="14"/>
    </location>
</feature>
<keyword id="KW-0113">Calvin cycle</keyword>
<keyword id="KW-0120">Carbon dioxide fixation</keyword>
<keyword id="KW-0903">Direct protein sequencing</keyword>
<keyword id="KW-0456">Lyase</keyword>
<keyword id="KW-0460">Magnesium</keyword>
<keyword id="KW-0479">Metal-binding</keyword>
<keyword id="KW-0503">Monooxygenase</keyword>
<keyword id="KW-0560">Oxidoreductase</keyword>
<accession>Q9ZB35</accession>
<proteinExistence type="evidence at protein level"/>
<name>RBL_HYDPS</name>
<sequence>MATKTYNAGVKEYRSTYWEPHYTPKDTDILACFKITPQPGVDREEVAAAVAAESSTGTWTTVWTDLLTDLDYYKGRAYRIEDVPGDDTCFYAFVAYPIDLFEEGSVVNVLTSLVGNVFGFKALRALRSEDVRFPIAYVKTCGGPPHGIQVERDIMNKYGRPLLGCTIKPKLGLSGKNYGRAVYECLRGGLDFTKDDENVNSQPFMRWPQRFDFEQEAIEKAHGETGERKVHYLNVTAPTPGEMYKRAEYAKELGAPIIMHDYLTGGLCANTGLANWCRDNGMLLHIHRAMHAELDRNPHHGIHFRVLTKVLRLSGRDHLHSGTVVGKLEGDRASTLGWIDIMRDTFIKEDRSRGIFFDQDFGSMPGVMPVASGGIHVWHMPALVNIFGDDSVLQFGGGTVGHPWGNAPGATANRVELEACVKARNEGIAVEKEGKAVLTEAANDSPELKIAMETWKEIKFEFDTVDKLDIAHK</sequence>
<comment type="function">
    <text>RuBisCO catalyzes two reactions: the carboxylation of D-ribulose 1,5-bisphosphate, the primary event in carbon dioxide fixation, as well as the oxidative fragmentation of the pentose substrate. Both reactions occur simultaneously and in competition at the same active site.</text>
</comment>
<comment type="catalytic activity">
    <reaction evidence="1">
        <text>2 (2R)-3-phosphoglycerate + 2 H(+) = D-ribulose 1,5-bisphosphate + CO2 + H2O</text>
        <dbReference type="Rhea" id="RHEA:23124"/>
        <dbReference type="ChEBI" id="CHEBI:15377"/>
        <dbReference type="ChEBI" id="CHEBI:15378"/>
        <dbReference type="ChEBI" id="CHEBI:16526"/>
        <dbReference type="ChEBI" id="CHEBI:57870"/>
        <dbReference type="ChEBI" id="CHEBI:58272"/>
        <dbReference type="EC" id="4.1.1.39"/>
    </reaction>
</comment>
<comment type="catalytic activity">
    <reaction evidence="1">
        <text>D-ribulose 1,5-bisphosphate + O2 = 2-phosphoglycolate + (2R)-3-phosphoglycerate + 2 H(+)</text>
        <dbReference type="Rhea" id="RHEA:36631"/>
        <dbReference type="ChEBI" id="CHEBI:15378"/>
        <dbReference type="ChEBI" id="CHEBI:15379"/>
        <dbReference type="ChEBI" id="CHEBI:57870"/>
        <dbReference type="ChEBI" id="CHEBI:58033"/>
        <dbReference type="ChEBI" id="CHEBI:58272"/>
    </reaction>
</comment>
<comment type="cofactor">
    <cofactor evidence="1">
        <name>Mg(2+)</name>
        <dbReference type="ChEBI" id="CHEBI:18420"/>
    </cofactor>
    <text evidence="1">Binds 1 Mg(2+) ion per subunit.</text>
</comment>
<comment type="biophysicochemical properties">
    <kinetics>
        <KM>0.1 uM for ribulose 1,5-bisphosphate</KM>
        <KM>16.4 uM for CO(2)</KM>
        <Vmax>436.2 nmol/min/ug enzyme with ribulose 1,5-bisphosphate as substrate</Vmax>
        <Vmax>777.8 nmol/min/ug enzyme with CO(2) as substrate</Vmax>
    </kinetics>
</comment>
<comment type="subunit">
    <text evidence="4">Heterohexadecamer of 8 large chains and 8 small chains.</text>
</comment>
<comment type="miscellaneous">
    <text evidence="1">The basic functional RuBisCO is composed of a large chain homodimer in a 'head-to-tail' conformation. In form I RuBisCO this homodimer is arranged in a barrel-like tetramer with the small subunits forming a tetrameric 'cap' on each end of the 'barrel'.</text>
</comment>
<comment type="similarity">
    <text evidence="1">Belongs to the RuBisCO large chain family. Type I subfamily.</text>
</comment>
<gene>
    <name evidence="1" type="primary">cbbL</name>
    <name evidence="1" type="synonym">rbcL</name>
</gene>